<feature type="chain" id="PRO_0000130006" description="Small ribosomal subunit protein uS19">
    <location>
        <begin position="1"/>
        <end position="136"/>
    </location>
</feature>
<organism>
    <name type="scientific">Methanothermobacter thermautotrophicus (strain ATCC 29096 / DSM 1053 / JCM 10044 / NBRC 100330 / Delta H)</name>
    <name type="common">Methanobacterium thermoautotrophicum</name>
    <dbReference type="NCBI Taxonomy" id="187420"/>
    <lineage>
        <taxon>Archaea</taxon>
        <taxon>Methanobacteriati</taxon>
        <taxon>Methanobacteriota</taxon>
        <taxon>Methanomada group</taxon>
        <taxon>Methanobacteria</taxon>
        <taxon>Methanobacteriales</taxon>
        <taxon>Methanobacteriaceae</taxon>
        <taxon>Methanothermobacter</taxon>
    </lineage>
</organism>
<gene>
    <name type="primary">rps19</name>
    <name type="ordered locus">MTH_6</name>
</gene>
<name>RS19_METTH</name>
<dbReference type="EMBL" id="AE000666">
    <property type="protein sequence ID" value="AAB84526.1"/>
    <property type="molecule type" value="Genomic_DNA"/>
</dbReference>
<dbReference type="PIR" id="E69179">
    <property type="entry name" value="E69179"/>
</dbReference>
<dbReference type="RefSeq" id="WP_010875648.1">
    <property type="nucleotide sequence ID" value="NC_000916.1"/>
</dbReference>
<dbReference type="SMR" id="O26114"/>
<dbReference type="FunCoup" id="O26114">
    <property type="interactions" value="132"/>
</dbReference>
<dbReference type="STRING" id="187420.MTH_6"/>
<dbReference type="PaxDb" id="187420-MTH_6"/>
<dbReference type="EnsemblBacteria" id="AAB84526">
    <property type="protein sequence ID" value="AAB84526"/>
    <property type="gene ID" value="MTH_6"/>
</dbReference>
<dbReference type="GeneID" id="1469968"/>
<dbReference type="KEGG" id="mth:MTH_6"/>
<dbReference type="PATRIC" id="fig|187420.15.peg.6"/>
<dbReference type="HOGENOM" id="CLU_097347_1_0_2"/>
<dbReference type="InParanoid" id="O26114"/>
<dbReference type="Proteomes" id="UP000005223">
    <property type="component" value="Chromosome"/>
</dbReference>
<dbReference type="GO" id="GO:0022627">
    <property type="term" value="C:cytosolic small ribosomal subunit"/>
    <property type="evidence" value="ECO:0007669"/>
    <property type="project" value="TreeGrafter"/>
</dbReference>
<dbReference type="GO" id="GO:0019843">
    <property type="term" value="F:rRNA binding"/>
    <property type="evidence" value="ECO:0007669"/>
    <property type="project" value="UniProtKB-UniRule"/>
</dbReference>
<dbReference type="GO" id="GO:0003735">
    <property type="term" value="F:structural constituent of ribosome"/>
    <property type="evidence" value="ECO:0007669"/>
    <property type="project" value="InterPro"/>
</dbReference>
<dbReference type="GO" id="GO:0000028">
    <property type="term" value="P:ribosomal small subunit assembly"/>
    <property type="evidence" value="ECO:0007669"/>
    <property type="project" value="TreeGrafter"/>
</dbReference>
<dbReference type="GO" id="GO:0006412">
    <property type="term" value="P:translation"/>
    <property type="evidence" value="ECO:0007669"/>
    <property type="project" value="UniProtKB-UniRule"/>
</dbReference>
<dbReference type="FunFam" id="3.30.860.10:FF:000002">
    <property type="entry name" value="40S ribosomal protein S15"/>
    <property type="match status" value="1"/>
</dbReference>
<dbReference type="Gene3D" id="3.30.860.10">
    <property type="entry name" value="30s Ribosomal Protein S19, Chain A"/>
    <property type="match status" value="1"/>
</dbReference>
<dbReference type="HAMAP" id="MF_00531">
    <property type="entry name" value="Ribosomal_uS19"/>
    <property type="match status" value="1"/>
</dbReference>
<dbReference type="InterPro" id="IPR002222">
    <property type="entry name" value="Ribosomal_uS19"/>
</dbReference>
<dbReference type="InterPro" id="IPR020934">
    <property type="entry name" value="Ribosomal_uS19_CS"/>
</dbReference>
<dbReference type="InterPro" id="IPR005713">
    <property type="entry name" value="Ribosomal_uS19_euk/arc"/>
</dbReference>
<dbReference type="InterPro" id="IPR023575">
    <property type="entry name" value="Ribosomal_uS19_SF"/>
</dbReference>
<dbReference type="NCBIfam" id="NF003121">
    <property type="entry name" value="PRK04038.1"/>
    <property type="match status" value="1"/>
</dbReference>
<dbReference type="NCBIfam" id="TIGR01025">
    <property type="entry name" value="uS19_arch"/>
    <property type="match status" value="1"/>
</dbReference>
<dbReference type="PANTHER" id="PTHR11880">
    <property type="entry name" value="RIBOSOMAL PROTEIN S19P FAMILY MEMBER"/>
    <property type="match status" value="1"/>
</dbReference>
<dbReference type="PANTHER" id="PTHR11880:SF2">
    <property type="entry name" value="SMALL RIBOSOMAL SUBUNIT PROTEIN US19"/>
    <property type="match status" value="1"/>
</dbReference>
<dbReference type="Pfam" id="PF00203">
    <property type="entry name" value="Ribosomal_S19"/>
    <property type="match status" value="1"/>
</dbReference>
<dbReference type="PIRSF" id="PIRSF002144">
    <property type="entry name" value="Ribosomal_S19"/>
    <property type="match status" value="1"/>
</dbReference>
<dbReference type="PRINTS" id="PR00975">
    <property type="entry name" value="RIBOSOMALS19"/>
</dbReference>
<dbReference type="SUPFAM" id="SSF54570">
    <property type="entry name" value="Ribosomal protein S19"/>
    <property type="match status" value="1"/>
</dbReference>
<dbReference type="PROSITE" id="PS00323">
    <property type="entry name" value="RIBOSOMAL_S19"/>
    <property type="match status" value="1"/>
</dbReference>
<reference key="1">
    <citation type="journal article" date="1997" name="J. Bacteriol.">
        <title>Complete genome sequence of Methanobacterium thermoautotrophicum deltaH: functional analysis and comparative genomics.</title>
        <authorList>
            <person name="Smith D.R."/>
            <person name="Doucette-Stamm L.A."/>
            <person name="Deloughery C."/>
            <person name="Lee H.-M."/>
            <person name="Dubois J."/>
            <person name="Aldredge T."/>
            <person name="Bashirzadeh R."/>
            <person name="Blakely D."/>
            <person name="Cook R."/>
            <person name="Gilbert K."/>
            <person name="Harrison D."/>
            <person name="Hoang L."/>
            <person name="Keagle P."/>
            <person name="Lumm W."/>
            <person name="Pothier B."/>
            <person name="Qiu D."/>
            <person name="Spadafora R."/>
            <person name="Vicare R."/>
            <person name="Wang Y."/>
            <person name="Wierzbowski J."/>
            <person name="Gibson R."/>
            <person name="Jiwani N."/>
            <person name="Caruso A."/>
            <person name="Bush D."/>
            <person name="Safer H."/>
            <person name="Patwell D."/>
            <person name="Prabhakar S."/>
            <person name="McDougall S."/>
            <person name="Shimer G."/>
            <person name="Goyal A."/>
            <person name="Pietrovski S."/>
            <person name="Church G.M."/>
            <person name="Daniels C.J."/>
            <person name="Mao J.-I."/>
            <person name="Rice P."/>
            <person name="Noelling J."/>
            <person name="Reeve J.N."/>
        </authorList>
    </citation>
    <scope>NUCLEOTIDE SEQUENCE [LARGE SCALE GENOMIC DNA]</scope>
    <source>
        <strain>ATCC 29096 / DSM 1053 / JCM 10044 / NBRC 100330 / Delta H</strain>
    </source>
</reference>
<keyword id="KW-1185">Reference proteome</keyword>
<keyword id="KW-0687">Ribonucleoprotein</keyword>
<keyword id="KW-0689">Ribosomal protein</keyword>
<keyword id="KW-0694">RNA-binding</keyword>
<keyword id="KW-0699">rRNA-binding</keyword>
<evidence type="ECO:0000250" key="1"/>
<evidence type="ECO:0000305" key="2"/>
<proteinExistence type="inferred from homology"/>
<comment type="function">
    <text evidence="1">Protein S19 forms a complex with S13 that binds strongly to the 16S ribosomal RNA.</text>
</comment>
<comment type="similarity">
    <text evidence="2">Belongs to the universal ribosomal protein uS19 family.</text>
</comment>
<sequence length="136" mass="15927">MARKEFRYRGYTLEELQEMPLDDVIKLFPSRQRRSLKRGFLPRQKKVLEKIRKIKKEGKTEGRPPVIRTHCRDMIVLPEMVGMTFGIHNGKEFVEVKIQPEMIGCYFGEFAPTRKKVEHGDPGMGATRFSMFVPLK</sequence>
<accession>O26114</accession>
<protein>
    <recommendedName>
        <fullName evidence="2">Small ribosomal subunit protein uS19</fullName>
    </recommendedName>
    <alternativeName>
        <fullName>30S ribosomal protein S19</fullName>
    </alternativeName>
</protein>